<proteinExistence type="inferred from homology"/>
<reference key="1">
    <citation type="journal article" date="2000" name="J. Mol. Evol.">
        <title>The structure and gene repertoire of an ancient red algal plastid genome.</title>
        <authorList>
            <person name="Gloeckner G."/>
            <person name="Rosenthal A."/>
            <person name="Valentin K.-U."/>
        </authorList>
    </citation>
    <scope>NUCLEOTIDE SEQUENCE [LARGE SCALE GENOMIC DNA]</scope>
    <source>
        <strain>RK-1</strain>
    </source>
</reference>
<feature type="initiator methionine" description="Removed" evidence="1">
    <location>
        <position position="1"/>
    </location>
</feature>
<feature type="chain" id="PRO_0000135421" description="Glutamine--fructose-6-phosphate aminotransferase [isomerizing]">
    <location>
        <begin position="2"/>
        <end position="621"/>
    </location>
</feature>
<feature type="domain" description="Glutamine amidotransferase type-2" evidence="1">
    <location>
        <begin position="2"/>
        <end position="223"/>
    </location>
</feature>
<feature type="domain" description="SIS 1" evidence="1">
    <location>
        <begin position="289"/>
        <end position="436"/>
    </location>
</feature>
<feature type="domain" description="SIS 2" evidence="1">
    <location>
        <begin position="470"/>
        <end position="611"/>
    </location>
</feature>
<feature type="active site" description="Nucleophile; for GATase activity" evidence="1">
    <location>
        <position position="2"/>
    </location>
</feature>
<feature type="active site" description="For Fru-6P isomerization activity" evidence="1">
    <location>
        <position position="616"/>
    </location>
</feature>
<geneLocation type="chloroplast"/>
<name>GLMS_CYACA</name>
<accession>O19908</accession>
<gene>
    <name evidence="1" type="primary">glmS</name>
    <name type="synonym">gcaA</name>
</gene>
<evidence type="ECO:0000255" key="1">
    <source>
        <dbReference type="HAMAP-Rule" id="MF_00164"/>
    </source>
</evidence>
<dbReference type="EC" id="2.6.1.16" evidence="1"/>
<dbReference type="EMBL" id="AF022186">
    <property type="protein sequence ID" value="AAB82681.1"/>
    <property type="molecule type" value="Genomic_DNA"/>
</dbReference>
<dbReference type="PIR" id="T11976">
    <property type="entry name" value="T11976"/>
</dbReference>
<dbReference type="RefSeq" id="NP_045080.1">
    <property type="nucleotide sequence ID" value="NC_001840.1"/>
</dbReference>
<dbReference type="SMR" id="O19908"/>
<dbReference type="MEROPS" id="C44.A08"/>
<dbReference type="GeneID" id="800239"/>
<dbReference type="GO" id="GO:0009507">
    <property type="term" value="C:chloroplast"/>
    <property type="evidence" value="ECO:0007669"/>
    <property type="project" value="UniProtKB-SubCell"/>
</dbReference>
<dbReference type="GO" id="GO:0005829">
    <property type="term" value="C:cytosol"/>
    <property type="evidence" value="ECO:0007669"/>
    <property type="project" value="TreeGrafter"/>
</dbReference>
<dbReference type="GO" id="GO:0097367">
    <property type="term" value="F:carbohydrate derivative binding"/>
    <property type="evidence" value="ECO:0007669"/>
    <property type="project" value="InterPro"/>
</dbReference>
<dbReference type="GO" id="GO:0004360">
    <property type="term" value="F:glutamine-fructose-6-phosphate transaminase (isomerizing) activity"/>
    <property type="evidence" value="ECO:0007669"/>
    <property type="project" value="UniProtKB-UniRule"/>
</dbReference>
<dbReference type="GO" id="GO:0005975">
    <property type="term" value="P:carbohydrate metabolic process"/>
    <property type="evidence" value="ECO:0007669"/>
    <property type="project" value="UniProtKB-UniRule"/>
</dbReference>
<dbReference type="GO" id="GO:0006002">
    <property type="term" value="P:fructose 6-phosphate metabolic process"/>
    <property type="evidence" value="ECO:0007669"/>
    <property type="project" value="TreeGrafter"/>
</dbReference>
<dbReference type="GO" id="GO:0006487">
    <property type="term" value="P:protein N-linked glycosylation"/>
    <property type="evidence" value="ECO:0007669"/>
    <property type="project" value="TreeGrafter"/>
</dbReference>
<dbReference type="GO" id="GO:0006047">
    <property type="term" value="P:UDP-N-acetylglucosamine metabolic process"/>
    <property type="evidence" value="ECO:0007669"/>
    <property type="project" value="TreeGrafter"/>
</dbReference>
<dbReference type="CDD" id="cd00714">
    <property type="entry name" value="GFAT"/>
    <property type="match status" value="1"/>
</dbReference>
<dbReference type="CDD" id="cd05008">
    <property type="entry name" value="SIS_GlmS_GlmD_1"/>
    <property type="match status" value="1"/>
</dbReference>
<dbReference type="CDD" id="cd05009">
    <property type="entry name" value="SIS_GlmS_GlmD_2"/>
    <property type="match status" value="1"/>
</dbReference>
<dbReference type="FunFam" id="3.60.20.10:FF:000006">
    <property type="entry name" value="Glutamine--fructose-6-phosphate aminotransferase [isomerizing]"/>
    <property type="match status" value="1"/>
</dbReference>
<dbReference type="Gene3D" id="3.40.50.10490">
    <property type="entry name" value="Glucose-6-phosphate isomerase like protein, domain 1"/>
    <property type="match status" value="2"/>
</dbReference>
<dbReference type="Gene3D" id="3.60.20.10">
    <property type="entry name" value="Glutamine Phosphoribosylpyrophosphate, subunit 1, domain 1"/>
    <property type="match status" value="1"/>
</dbReference>
<dbReference type="HAMAP" id="MF_00164">
    <property type="entry name" value="GlmS"/>
    <property type="match status" value="1"/>
</dbReference>
<dbReference type="InterPro" id="IPR017932">
    <property type="entry name" value="GATase_2_dom"/>
</dbReference>
<dbReference type="InterPro" id="IPR005855">
    <property type="entry name" value="GFAT"/>
</dbReference>
<dbReference type="InterPro" id="IPR047084">
    <property type="entry name" value="GFAT_N"/>
</dbReference>
<dbReference type="InterPro" id="IPR035466">
    <property type="entry name" value="GlmS/AgaS_SIS"/>
</dbReference>
<dbReference type="InterPro" id="IPR035490">
    <property type="entry name" value="GlmS/FrlB_SIS"/>
</dbReference>
<dbReference type="InterPro" id="IPR029055">
    <property type="entry name" value="Ntn_hydrolases_N"/>
</dbReference>
<dbReference type="InterPro" id="IPR001347">
    <property type="entry name" value="SIS_dom"/>
</dbReference>
<dbReference type="InterPro" id="IPR046348">
    <property type="entry name" value="SIS_dom_sf"/>
</dbReference>
<dbReference type="NCBIfam" id="TIGR01135">
    <property type="entry name" value="glmS"/>
    <property type="match status" value="1"/>
</dbReference>
<dbReference type="NCBIfam" id="NF001484">
    <property type="entry name" value="PRK00331.1"/>
    <property type="match status" value="1"/>
</dbReference>
<dbReference type="PANTHER" id="PTHR10937">
    <property type="entry name" value="GLUCOSAMINE--FRUCTOSE-6-PHOSPHATE AMINOTRANSFERASE, ISOMERIZING"/>
    <property type="match status" value="1"/>
</dbReference>
<dbReference type="PANTHER" id="PTHR10937:SF0">
    <property type="entry name" value="GLUTAMINE--FRUCTOSE-6-PHOSPHATE TRANSAMINASE (ISOMERIZING)"/>
    <property type="match status" value="1"/>
</dbReference>
<dbReference type="Pfam" id="PF13522">
    <property type="entry name" value="GATase_6"/>
    <property type="match status" value="1"/>
</dbReference>
<dbReference type="Pfam" id="PF01380">
    <property type="entry name" value="SIS"/>
    <property type="match status" value="2"/>
</dbReference>
<dbReference type="SUPFAM" id="SSF56235">
    <property type="entry name" value="N-terminal nucleophile aminohydrolases (Ntn hydrolases)"/>
    <property type="match status" value="1"/>
</dbReference>
<dbReference type="SUPFAM" id="SSF53697">
    <property type="entry name" value="SIS domain"/>
    <property type="match status" value="1"/>
</dbReference>
<dbReference type="PROSITE" id="PS51278">
    <property type="entry name" value="GATASE_TYPE_2"/>
    <property type="match status" value="1"/>
</dbReference>
<dbReference type="PROSITE" id="PS51464">
    <property type="entry name" value="SIS"/>
    <property type="match status" value="2"/>
</dbReference>
<keyword id="KW-0032">Aminotransferase</keyword>
<keyword id="KW-0150">Chloroplast</keyword>
<keyword id="KW-0315">Glutamine amidotransferase</keyword>
<keyword id="KW-0934">Plastid</keyword>
<keyword id="KW-0677">Repeat</keyword>
<keyword id="KW-0808">Transferase</keyword>
<organism>
    <name type="scientific">Cyanidium caldarium</name>
    <name type="common">Red alga</name>
    <dbReference type="NCBI Taxonomy" id="2771"/>
    <lineage>
        <taxon>Eukaryota</taxon>
        <taxon>Rhodophyta</taxon>
        <taxon>Bangiophyceae</taxon>
        <taxon>Cyanidiales</taxon>
        <taxon>Cyanidiaceae</taxon>
        <taxon>Cyanidium</taxon>
    </lineage>
</organism>
<comment type="function">
    <text evidence="1">Catalyzes the first step in hexosamine metabolism, converting fructose-6P into glucosamine-6P using glutamine as a nitrogen source.</text>
</comment>
<comment type="catalytic activity">
    <reaction evidence="1">
        <text>D-fructose 6-phosphate + L-glutamine = D-glucosamine 6-phosphate + L-glutamate</text>
        <dbReference type="Rhea" id="RHEA:13237"/>
        <dbReference type="ChEBI" id="CHEBI:29985"/>
        <dbReference type="ChEBI" id="CHEBI:58359"/>
        <dbReference type="ChEBI" id="CHEBI:58725"/>
        <dbReference type="ChEBI" id="CHEBI:61527"/>
        <dbReference type="EC" id="2.6.1.16"/>
    </reaction>
</comment>
<comment type="subunit">
    <text evidence="1">Homodimer.</text>
</comment>
<comment type="subcellular location">
    <subcellularLocation>
        <location>Plastid</location>
        <location>Chloroplast</location>
    </subcellularLocation>
</comment>
<sequence>MCGIIGYVGEGSCRDVLINGLDKLSYRGYDSAGIAFIKNSKINVVRSKGRIEKLKEKINDNFQKFEIGNIGIGHTRWATHGEPTEINAHPHLDAEGQFAVVQNGVIENYVQLKNYLTVNGTYFLSDTDAEVIPHLIAYKQKHLKLQIVEAILCALSELKGNFSTVIIARDMPDSIFVYQNKTALTLGKGSNFYSVSSDPIALIPYTKNFIQLHDRELGIISISQLAIYNKGKFTYPSRRFKANLNDLITNKASFDSYTLKEIHDQKKVLRNLIISTLQSEKSIDESGQLHLEYKKIKNFQIIACGSSFNAALVGKVILEKLIRIPVHVYYGSEFKTNLPPLLPCTLTIAVSQSGETGDMLSAIEIEKSRRKFQNTVYKPYLLSITNKNYSSITKKTAQSIDLKAGIEIGVAATKTFTAQTLSFYLLALKLAEHKFTLRKKEINKHLDEIRNLPKAIAHLLIKDESSIKWLSKQLKEISKCFYIGKGLNLGSALEGALKLKEISYIHCDGYAAGEIKHGPIALVENNTLIITITDPEQSQESTFASSQEAKARGAVLLAITHIEDSSIYQTFDFIIKIPKISQICASITSSVSLQLFAYYMAYYKGNDIDKPRNLAKSVTVE</sequence>
<protein>
    <recommendedName>
        <fullName evidence="1">Glutamine--fructose-6-phosphate aminotransferase [isomerizing]</fullName>
        <ecNumber evidence="1">2.6.1.16</ecNumber>
    </recommendedName>
    <alternativeName>
        <fullName evidence="1">D-fructose-6-phosphate amidotransferase</fullName>
    </alternativeName>
    <alternativeName>
        <fullName evidence="1">GFAT</fullName>
    </alternativeName>
    <alternativeName>
        <fullName evidence="1">Glucosamine-6-phosphate synthase</fullName>
    </alternativeName>
    <alternativeName>
        <fullName evidence="1">Hexosephosphate aminotransferase</fullName>
    </alternativeName>
    <alternativeName>
        <fullName evidence="1">L-glutamine--D-fructose-6-phosphate amidotransferase</fullName>
    </alternativeName>
</protein>